<protein>
    <recommendedName>
        <fullName evidence="1">Methionine import ATP-binding protein MetN</fullName>
        <ecNumber evidence="1">7.4.2.11</ecNumber>
    </recommendedName>
</protein>
<feature type="chain" id="PRO_0000270259" description="Methionine import ATP-binding protein MetN">
    <location>
        <begin position="1"/>
        <end position="369"/>
    </location>
</feature>
<feature type="domain" description="ABC transporter" evidence="1">
    <location>
        <begin position="31"/>
        <end position="266"/>
    </location>
</feature>
<feature type="binding site" evidence="1">
    <location>
        <begin position="63"/>
        <end position="70"/>
    </location>
    <ligand>
        <name>ATP</name>
        <dbReference type="ChEBI" id="CHEBI:30616"/>
    </ligand>
</feature>
<sequence length="369" mass="39445">MQHAAVCSGTSRHRRTTVTIEKPPATSAPIVEMKDVRRMFGETAAINGVSLSVARGEILGIIGRSGAGKSTLIRCVNGLEKPDTGSIHIEGREITSLDEDALRPVRRRIGMVFQHFNLLSAKTAAQNIALPLKIAGMPKAERIKRVAELLELVGLSDKASHYPAQLSGGQKQRVGIARALAAEPAVLLSDEATSALDPETTQSILALLKDINAKLGLTILLITHEMDVIRRIADRVIVLDHGLIAEEGPVWKVFANPQSPVTQSMLQVLTPELPAIWRNRLEKKGDQAILRVKLSGMAAKGAFFNDVAAATSLAPQLIHGGMDTIQGEPVGTLFIGLPAEDKTKLKAAIGYLNTHADATEVLGYVSGNA</sequence>
<name>METN_BRUME</name>
<comment type="function">
    <text evidence="1">Part of the ABC transporter complex MetNIQ involved in methionine import. Responsible for energy coupling to the transport system.</text>
</comment>
<comment type="catalytic activity">
    <reaction evidence="1">
        <text>L-methionine(out) + ATP + H2O = L-methionine(in) + ADP + phosphate + H(+)</text>
        <dbReference type="Rhea" id="RHEA:29779"/>
        <dbReference type="ChEBI" id="CHEBI:15377"/>
        <dbReference type="ChEBI" id="CHEBI:15378"/>
        <dbReference type="ChEBI" id="CHEBI:30616"/>
        <dbReference type="ChEBI" id="CHEBI:43474"/>
        <dbReference type="ChEBI" id="CHEBI:57844"/>
        <dbReference type="ChEBI" id="CHEBI:456216"/>
        <dbReference type="EC" id="7.4.2.11"/>
    </reaction>
</comment>
<comment type="catalytic activity">
    <reaction evidence="1">
        <text>D-methionine(out) + ATP + H2O = D-methionine(in) + ADP + phosphate + H(+)</text>
        <dbReference type="Rhea" id="RHEA:29767"/>
        <dbReference type="ChEBI" id="CHEBI:15377"/>
        <dbReference type="ChEBI" id="CHEBI:15378"/>
        <dbReference type="ChEBI" id="CHEBI:30616"/>
        <dbReference type="ChEBI" id="CHEBI:43474"/>
        <dbReference type="ChEBI" id="CHEBI:57932"/>
        <dbReference type="ChEBI" id="CHEBI:456216"/>
        <dbReference type="EC" id="7.4.2.11"/>
    </reaction>
</comment>
<comment type="subunit">
    <text evidence="1">The complex is composed of two ATP-binding proteins (MetN), two transmembrane proteins (MetI) and a solute-binding protein (MetQ).</text>
</comment>
<comment type="subcellular location">
    <subcellularLocation>
        <location evidence="1">Cell inner membrane</location>
        <topology evidence="1">Peripheral membrane protein</topology>
    </subcellularLocation>
</comment>
<comment type="similarity">
    <text evidence="1">Belongs to the ABC transporter superfamily. Methionine importer (TC 3.A.1.24) family.</text>
</comment>
<evidence type="ECO:0000255" key="1">
    <source>
        <dbReference type="HAMAP-Rule" id="MF_01719"/>
    </source>
</evidence>
<gene>
    <name evidence="1" type="primary">metN</name>
    <name type="ordered locus">BMEII0337</name>
</gene>
<accession>Q8YD40</accession>
<reference key="1">
    <citation type="journal article" date="2002" name="Proc. Natl. Acad. Sci. U.S.A.">
        <title>The genome sequence of the facultative intracellular pathogen Brucella melitensis.</title>
        <authorList>
            <person name="DelVecchio V.G."/>
            <person name="Kapatral V."/>
            <person name="Redkar R.J."/>
            <person name="Patra G."/>
            <person name="Mujer C."/>
            <person name="Los T."/>
            <person name="Ivanova N."/>
            <person name="Anderson I."/>
            <person name="Bhattacharyya A."/>
            <person name="Lykidis A."/>
            <person name="Reznik G."/>
            <person name="Jablonski L."/>
            <person name="Larsen N."/>
            <person name="D'Souza M."/>
            <person name="Bernal A."/>
            <person name="Mazur M."/>
            <person name="Goltsman E."/>
            <person name="Selkov E."/>
            <person name="Elzer P.H."/>
            <person name="Hagius S."/>
            <person name="O'Callaghan D."/>
            <person name="Letesson J.-J."/>
            <person name="Haselkorn R."/>
            <person name="Kyrpides N.C."/>
            <person name="Overbeek R."/>
        </authorList>
    </citation>
    <scope>NUCLEOTIDE SEQUENCE [LARGE SCALE GENOMIC DNA]</scope>
    <source>
        <strain>ATCC 23456 / CCUG 17765 / NCTC 10094 / 16M</strain>
    </source>
</reference>
<keyword id="KW-0029">Amino-acid transport</keyword>
<keyword id="KW-0067">ATP-binding</keyword>
<keyword id="KW-0997">Cell inner membrane</keyword>
<keyword id="KW-1003">Cell membrane</keyword>
<keyword id="KW-0472">Membrane</keyword>
<keyword id="KW-0547">Nucleotide-binding</keyword>
<keyword id="KW-1278">Translocase</keyword>
<keyword id="KW-0813">Transport</keyword>
<organism>
    <name type="scientific">Brucella melitensis biotype 1 (strain ATCC 23456 / CCUG 17765 / NCTC 10094 / 16M)</name>
    <dbReference type="NCBI Taxonomy" id="224914"/>
    <lineage>
        <taxon>Bacteria</taxon>
        <taxon>Pseudomonadati</taxon>
        <taxon>Pseudomonadota</taxon>
        <taxon>Alphaproteobacteria</taxon>
        <taxon>Hyphomicrobiales</taxon>
        <taxon>Brucellaceae</taxon>
        <taxon>Brucella/Ochrobactrum group</taxon>
        <taxon>Brucella</taxon>
    </lineage>
</organism>
<dbReference type="EC" id="7.4.2.11" evidence="1"/>
<dbReference type="EMBL" id="AE008918">
    <property type="protein sequence ID" value="AAL53579.1"/>
    <property type="molecule type" value="Genomic_DNA"/>
</dbReference>
<dbReference type="PIR" id="AH3551">
    <property type="entry name" value="AH3551"/>
</dbReference>
<dbReference type="SMR" id="Q8YD40"/>
<dbReference type="KEGG" id="bme:BMEII0337"/>
<dbReference type="eggNOG" id="COG1135">
    <property type="taxonomic scope" value="Bacteria"/>
</dbReference>
<dbReference type="Proteomes" id="UP000000419">
    <property type="component" value="Chromosome II"/>
</dbReference>
<dbReference type="GO" id="GO:0005886">
    <property type="term" value="C:plasma membrane"/>
    <property type="evidence" value="ECO:0007669"/>
    <property type="project" value="UniProtKB-SubCell"/>
</dbReference>
<dbReference type="GO" id="GO:0033232">
    <property type="term" value="F:ABC-type D-methionine transporter activity"/>
    <property type="evidence" value="ECO:0007669"/>
    <property type="project" value="UniProtKB-EC"/>
</dbReference>
<dbReference type="GO" id="GO:0005524">
    <property type="term" value="F:ATP binding"/>
    <property type="evidence" value="ECO:0007669"/>
    <property type="project" value="UniProtKB-KW"/>
</dbReference>
<dbReference type="GO" id="GO:0016887">
    <property type="term" value="F:ATP hydrolysis activity"/>
    <property type="evidence" value="ECO:0007669"/>
    <property type="project" value="InterPro"/>
</dbReference>
<dbReference type="CDD" id="cd03258">
    <property type="entry name" value="ABC_MetN_methionine_transporter"/>
    <property type="match status" value="1"/>
</dbReference>
<dbReference type="FunFam" id="3.40.50.300:FF:000056">
    <property type="entry name" value="Cell division ATP-binding protein FtsE"/>
    <property type="match status" value="1"/>
</dbReference>
<dbReference type="Gene3D" id="3.30.70.260">
    <property type="match status" value="1"/>
</dbReference>
<dbReference type="Gene3D" id="3.40.50.300">
    <property type="entry name" value="P-loop containing nucleotide triphosphate hydrolases"/>
    <property type="match status" value="1"/>
</dbReference>
<dbReference type="InterPro" id="IPR003593">
    <property type="entry name" value="AAA+_ATPase"/>
</dbReference>
<dbReference type="InterPro" id="IPR003439">
    <property type="entry name" value="ABC_transporter-like_ATP-bd"/>
</dbReference>
<dbReference type="InterPro" id="IPR017871">
    <property type="entry name" value="ABC_transporter-like_CS"/>
</dbReference>
<dbReference type="InterPro" id="IPR045865">
    <property type="entry name" value="ACT-like_dom_sf"/>
</dbReference>
<dbReference type="InterPro" id="IPR041701">
    <property type="entry name" value="MetN_ABC"/>
</dbReference>
<dbReference type="InterPro" id="IPR050086">
    <property type="entry name" value="MetN_ABC_transporter-like"/>
</dbReference>
<dbReference type="InterPro" id="IPR018449">
    <property type="entry name" value="NIL_domain"/>
</dbReference>
<dbReference type="InterPro" id="IPR027417">
    <property type="entry name" value="P-loop_NTPase"/>
</dbReference>
<dbReference type="PANTHER" id="PTHR43166">
    <property type="entry name" value="AMINO ACID IMPORT ATP-BINDING PROTEIN"/>
    <property type="match status" value="1"/>
</dbReference>
<dbReference type="PANTHER" id="PTHR43166:SF30">
    <property type="entry name" value="METHIONINE IMPORT ATP-BINDING PROTEIN METN"/>
    <property type="match status" value="1"/>
</dbReference>
<dbReference type="Pfam" id="PF00005">
    <property type="entry name" value="ABC_tran"/>
    <property type="match status" value="1"/>
</dbReference>
<dbReference type="Pfam" id="PF09383">
    <property type="entry name" value="NIL"/>
    <property type="match status" value="1"/>
</dbReference>
<dbReference type="SMART" id="SM00382">
    <property type="entry name" value="AAA"/>
    <property type="match status" value="1"/>
</dbReference>
<dbReference type="SMART" id="SM00930">
    <property type="entry name" value="NIL"/>
    <property type="match status" value="1"/>
</dbReference>
<dbReference type="SUPFAM" id="SSF55021">
    <property type="entry name" value="ACT-like"/>
    <property type="match status" value="1"/>
</dbReference>
<dbReference type="SUPFAM" id="SSF52540">
    <property type="entry name" value="P-loop containing nucleoside triphosphate hydrolases"/>
    <property type="match status" value="1"/>
</dbReference>
<dbReference type="PROSITE" id="PS00211">
    <property type="entry name" value="ABC_TRANSPORTER_1"/>
    <property type="match status" value="1"/>
</dbReference>
<dbReference type="PROSITE" id="PS50893">
    <property type="entry name" value="ABC_TRANSPORTER_2"/>
    <property type="match status" value="1"/>
</dbReference>
<dbReference type="PROSITE" id="PS51264">
    <property type="entry name" value="METN"/>
    <property type="match status" value="1"/>
</dbReference>
<proteinExistence type="inferred from homology"/>